<comment type="function">
    <text evidence="1">Reversibly catalyzes the transfer of phosphate between ATP and various phosphogens (e.g. creatine phosphate). Creatine kinase isoenzymes play a central role in energy transduction in tissues with large, fluctuating energy demands, such as skeletal muscle, heart, brain and spermatozoa.</text>
</comment>
<comment type="catalytic activity">
    <reaction evidence="1 7">
        <text>creatine + ATP = N-phosphocreatine + ADP + H(+)</text>
        <dbReference type="Rhea" id="RHEA:17157"/>
        <dbReference type="ChEBI" id="CHEBI:15378"/>
        <dbReference type="ChEBI" id="CHEBI:30616"/>
        <dbReference type="ChEBI" id="CHEBI:57947"/>
        <dbReference type="ChEBI" id="CHEBI:58092"/>
        <dbReference type="ChEBI" id="CHEBI:456216"/>
        <dbReference type="EC" id="2.7.3.2"/>
    </reaction>
</comment>
<comment type="subunit">
    <text evidence="4">Dimer of identical or non-identical chains, which can be either B (brain type) or M (muscle type). With MM being the major form in skeletal muscle and myocardium, MB existing in myocardium, and BB existing in many tissues, especially brain.</text>
</comment>
<comment type="interaction">
    <interactant intactId="EBI-4287089">
        <id>P06732</id>
    </interactant>
    <interactant intactId="EBI-745641">
        <id>Q96DX5</id>
        <label>ASB9</label>
    </interactant>
    <organismsDiffer>false</organismsDiffer>
    <experiments>12</experiments>
</comment>
<comment type="interaction">
    <interactant intactId="EBI-4287089">
        <id>P06732</id>
    </interactant>
    <interactant intactId="EBI-357706">
        <id>P12277</id>
        <label>CKB</label>
    </interactant>
    <organismsDiffer>false</organismsDiffer>
    <experiments>3</experiments>
</comment>
<comment type="interaction">
    <interactant intactId="EBI-4287089">
        <id>P06732</id>
    </interactant>
    <interactant intactId="EBI-1050662">
        <id>P12532</id>
        <label>CKMT1B</label>
    </interactant>
    <organismsDiffer>false</organismsDiffer>
    <experiments>3</experiments>
</comment>
<comment type="interaction">
    <interactant intactId="EBI-4287089">
        <id>P06732</id>
    </interactant>
    <interactant intactId="EBI-466029">
        <id>P42858</id>
        <label>HTT</label>
    </interactant>
    <organismsDiffer>false</organismsDiffer>
    <experiments>3</experiments>
</comment>
<comment type="subcellular location">
    <subcellularLocation>
        <location>Cytoplasm</location>
    </subcellularLocation>
</comment>
<comment type="similarity">
    <text evidence="5 6">Belongs to the ATP:guanido phosphotransferase family.</text>
</comment>
<comment type="online information" name="Wikipedia">
    <link uri="https://en.wikipedia.org/wiki/Creatine_kinase"/>
    <text>Creatine kinase entry</text>
</comment>
<organism>
    <name type="scientific">Homo sapiens</name>
    <name type="common">Human</name>
    <dbReference type="NCBI Taxonomy" id="9606"/>
    <lineage>
        <taxon>Eukaryota</taxon>
        <taxon>Metazoa</taxon>
        <taxon>Chordata</taxon>
        <taxon>Craniata</taxon>
        <taxon>Vertebrata</taxon>
        <taxon>Euteleostomi</taxon>
        <taxon>Mammalia</taxon>
        <taxon>Eutheria</taxon>
        <taxon>Euarchontoglires</taxon>
        <taxon>Primates</taxon>
        <taxon>Haplorrhini</taxon>
        <taxon>Catarrhini</taxon>
        <taxon>Hominidae</taxon>
        <taxon>Homo</taxon>
    </lineage>
</organism>
<keyword id="KW-0002">3D-structure</keyword>
<keyword id="KW-0067">ATP-binding</keyword>
<keyword id="KW-0963">Cytoplasm</keyword>
<keyword id="KW-0903">Direct protein sequencing</keyword>
<keyword id="KW-0418">Kinase</keyword>
<keyword id="KW-0547">Nucleotide-binding</keyword>
<keyword id="KW-0597">Phosphoprotein</keyword>
<keyword id="KW-1267">Proteomics identification</keyword>
<keyword id="KW-1185">Reference proteome</keyword>
<keyword id="KW-0808">Transferase</keyword>
<gene>
    <name type="primary">CKM</name>
    <name type="synonym">CKMM</name>
</gene>
<name>KCRM_HUMAN</name>
<accession>P06732</accession>
<accession>Q96QL9</accession>
<evidence type="ECO:0000250" key="1">
    <source>
        <dbReference type="UniProtKB" id="P00563"/>
    </source>
</evidence>
<evidence type="ECO:0000250" key="2">
    <source>
        <dbReference type="UniProtKB" id="P00564"/>
    </source>
</evidence>
<evidence type="ECO:0000250" key="3">
    <source>
        <dbReference type="UniProtKB" id="P07310"/>
    </source>
</evidence>
<evidence type="ECO:0000250" key="4">
    <source>
        <dbReference type="UniProtKB" id="P12277"/>
    </source>
</evidence>
<evidence type="ECO:0000255" key="5">
    <source>
        <dbReference type="PROSITE-ProRule" id="PRU00842"/>
    </source>
</evidence>
<evidence type="ECO:0000255" key="6">
    <source>
        <dbReference type="PROSITE-ProRule" id="PRU00843"/>
    </source>
</evidence>
<evidence type="ECO:0000255" key="7">
    <source>
        <dbReference type="PROSITE-ProRule" id="PRU10029"/>
    </source>
</evidence>
<evidence type="ECO:0000269" key="8">
    <source ref="4"/>
</evidence>
<evidence type="ECO:0000305" key="9"/>
<evidence type="ECO:0007829" key="10">
    <source>
        <dbReference type="PDB" id="1I0E"/>
    </source>
</evidence>
<proteinExistence type="evidence at protein level"/>
<sequence length="381" mass="43101">MPFGNTHNKFKLNYKPEEEYPDLSKHNNHMAKVLTLELYKKLRDKETPSGFTVDDVIQTGVDNPGHPFIMTVGCVAGDEESYEVFKELFDPIISDRHGGYKPTDKHKTDLNHENLKGGDDLDPNYVLSSRVRTGRSIKGYTLPPHCSRGERRAVEKLSVEALNSLTGEFKGKYYPLKSMTEKEQQQLIDDHFLFDKPVSPLLLASGMARDWPDARGIWHNDNKSFLVWVNEEDHLRVISMEKGGNMKEVFRRFCVGLQKIEEIFKKAGHPFMWNQHLGYVLTCPSNLGTGLRGGVHVKLAHLSKHPKFEEILTRLRLQKRGTGGVDTAAVGSVFDVSNADRLGSSEVEQVQLVVDGVKLMVEMEKKLEKGQSIDDMIPAQK</sequence>
<feature type="chain" id="PRO_0000211975" description="Creatine kinase M-type">
    <location>
        <begin position="1"/>
        <end position="381"/>
    </location>
</feature>
<feature type="domain" description="Phosphagen kinase N-terminal" evidence="5">
    <location>
        <begin position="11"/>
        <end position="98"/>
    </location>
</feature>
<feature type="domain" description="Phosphagen kinase C-terminal" evidence="6">
    <location>
        <begin position="125"/>
        <end position="367"/>
    </location>
</feature>
<feature type="binding site" evidence="6">
    <location>
        <begin position="128"/>
        <end position="132"/>
    </location>
    <ligand>
        <name>ATP</name>
        <dbReference type="ChEBI" id="CHEBI:30616"/>
    </ligand>
</feature>
<feature type="binding site" evidence="6">
    <location>
        <position position="191"/>
    </location>
    <ligand>
        <name>ATP</name>
        <dbReference type="ChEBI" id="CHEBI:30616"/>
    </ligand>
</feature>
<feature type="binding site" evidence="6">
    <location>
        <position position="236"/>
    </location>
    <ligand>
        <name>ATP</name>
        <dbReference type="ChEBI" id="CHEBI:30616"/>
    </ligand>
</feature>
<feature type="binding site" evidence="6">
    <location>
        <position position="292"/>
    </location>
    <ligand>
        <name>ATP</name>
        <dbReference type="ChEBI" id="CHEBI:30616"/>
    </ligand>
</feature>
<feature type="binding site" evidence="6">
    <location>
        <begin position="320"/>
        <end position="325"/>
    </location>
    <ligand>
        <name>ATP</name>
        <dbReference type="ChEBI" id="CHEBI:30616"/>
    </ligand>
</feature>
<feature type="binding site" evidence="6">
    <location>
        <position position="335"/>
    </location>
    <ligand>
        <name>ATP</name>
        <dbReference type="ChEBI" id="CHEBI:30616"/>
    </ligand>
</feature>
<feature type="modified residue" description="Phosphoserine" evidence="3">
    <location>
        <position position="164"/>
    </location>
</feature>
<feature type="modified residue" description="Phosphothreonine" evidence="2">
    <location>
        <position position="166"/>
    </location>
</feature>
<feature type="modified residue" description="Phosphoserine" evidence="2">
    <location>
        <position position="178"/>
    </location>
</feature>
<feature type="modified residue" description="Phosphothreonine" evidence="2">
    <location>
        <position position="180"/>
    </location>
</feature>
<feature type="modified residue" description="Phosphoserine" evidence="3">
    <location>
        <position position="199"/>
    </location>
</feature>
<feature type="modified residue" description="Phosphothreonine" evidence="2">
    <location>
        <position position="313"/>
    </location>
</feature>
<feature type="modified residue" description="Phosphothreonine" evidence="3">
    <location>
        <position position="322"/>
    </location>
</feature>
<feature type="modified residue" description="Phosphoserine" evidence="3">
    <location>
        <position position="372"/>
    </location>
</feature>
<feature type="sequence variant" id="VAR_018680" description="In dbSNP:rs11559024." evidence="8">
    <original>E</original>
    <variation>G</variation>
    <location>
        <position position="83"/>
    </location>
</feature>
<feature type="sequence variant" id="VAR_018681" description="In dbSNP:rs17875653." evidence="8">
    <original>L</original>
    <variation>V</variation>
    <location>
        <position position="127"/>
    </location>
</feature>
<feature type="sequence variant" id="VAR_049675" description="In dbSNP:rs17357122.">
    <original>T</original>
    <variation>M</variation>
    <location>
        <position position="166"/>
    </location>
</feature>
<feature type="sequence variant" id="VAR_018682" description="In dbSNP:rs17875625." evidence="8">
    <original>G</original>
    <variation>A</variation>
    <location>
        <position position="243"/>
    </location>
</feature>
<feature type="sequence conflict" description="In Ref. 1; AAA52025." evidence="9" ref="1">
    <original>T</original>
    <variation>I</variation>
    <location>
        <position position="47"/>
    </location>
</feature>
<feature type="sequence conflict" description="In Ref. 1; AAA52025." evidence="9" ref="1">
    <original>R</original>
    <variation>P</variation>
    <location>
        <position position="130"/>
    </location>
</feature>
<feature type="sequence conflict" description="In Ref. 1; AAA52025." evidence="9" ref="1">
    <original>L</original>
    <variation>Q</variation>
    <location>
        <position position="193"/>
    </location>
</feature>
<feature type="sequence conflict" description="In Ref. 1; AAA52025." evidence="9" ref="1">
    <original>D</original>
    <variation>H</variation>
    <location>
        <position position="210"/>
    </location>
</feature>
<feature type="sequence conflict" description="In Ref. 1; AAA52025." evidence="9" ref="1">
    <original>R</original>
    <variation>P</variation>
    <location>
        <position position="215"/>
    </location>
</feature>
<feature type="sequence conflict" description="In Ref. 3; AAP35439 and 6; AAH07462." evidence="9" ref="3 6">
    <original>F</original>
    <variation>L</variation>
    <location>
        <position position="225"/>
    </location>
</feature>
<feature type="sequence conflict" description="In Ref. 1; AAA52025." evidence="9" ref="1">
    <original>G</original>
    <variation>A</variation>
    <location>
        <position position="324"/>
    </location>
</feature>
<feature type="helix" evidence="10">
    <location>
        <begin position="16"/>
        <end position="19"/>
    </location>
</feature>
<feature type="helix" evidence="10">
    <location>
        <begin position="29"/>
        <end position="33"/>
    </location>
</feature>
<feature type="helix" evidence="10">
    <location>
        <begin position="36"/>
        <end position="42"/>
    </location>
</feature>
<feature type="helix" evidence="10">
    <location>
        <begin position="53"/>
        <end position="62"/>
    </location>
</feature>
<feature type="strand" evidence="10">
    <location>
        <begin position="67"/>
        <end position="69"/>
    </location>
</feature>
<feature type="helix" evidence="10">
    <location>
        <begin position="80"/>
        <end position="84"/>
    </location>
</feature>
<feature type="helix" evidence="10">
    <location>
        <begin position="86"/>
        <end position="93"/>
    </location>
</feature>
<feature type="turn" evidence="10">
    <location>
        <begin position="94"/>
        <end position="96"/>
    </location>
</feature>
<feature type="strand" evidence="10">
    <location>
        <begin position="97"/>
        <end position="99"/>
    </location>
</feature>
<feature type="turn" evidence="10">
    <location>
        <begin position="123"/>
        <end position="125"/>
    </location>
</feature>
<feature type="strand" evidence="10">
    <location>
        <begin position="126"/>
        <end position="132"/>
    </location>
</feature>
<feature type="turn" evidence="10">
    <location>
        <begin position="143"/>
        <end position="145"/>
    </location>
</feature>
<feature type="helix" evidence="10">
    <location>
        <begin position="148"/>
        <end position="164"/>
    </location>
</feature>
<feature type="helix" evidence="10">
    <location>
        <begin position="167"/>
        <end position="169"/>
    </location>
</feature>
<feature type="strand" evidence="10">
    <location>
        <begin position="171"/>
        <end position="176"/>
    </location>
</feature>
<feature type="turn" evidence="10">
    <location>
        <begin position="181"/>
        <end position="183"/>
    </location>
</feature>
<feature type="helix" evidence="10">
    <location>
        <begin position="184"/>
        <end position="189"/>
    </location>
</feature>
<feature type="turn" evidence="10">
    <location>
        <begin position="200"/>
        <end position="206"/>
    </location>
</feature>
<feature type="turn" evidence="10">
    <location>
        <begin position="209"/>
        <end position="214"/>
    </location>
</feature>
<feature type="strand" evidence="10">
    <location>
        <begin position="216"/>
        <end position="220"/>
    </location>
</feature>
<feature type="strand" evidence="10">
    <location>
        <begin position="223"/>
        <end position="244"/>
    </location>
</feature>
<feature type="helix" evidence="10">
    <location>
        <begin position="246"/>
        <end position="266"/>
    </location>
</feature>
<feature type="turn" evidence="10">
    <location>
        <begin position="275"/>
        <end position="277"/>
    </location>
</feature>
<feature type="helix" evidence="10">
    <location>
        <begin position="284"/>
        <end position="286"/>
    </location>
</feature>
<feature type="strand" evidence="10">
    <location>
        <begin position="292"/>
        <end position="298"/>
    </location>
</feature>
<feature type="turn" evidence="10">
    <location>
        <begin position="300"/>
        <end position="304"/>
    </location>
</feature>
<feature type="helix" evidence="10">
    <location>
        <begin position="308"/>
        <end position="314"/>
    </location>
</feature>
<feature type="strand" evidence="10">
    <location>
        <begin position="333"/>
        <end position="338"/>
    </location>
</feature>
<feature type="strand" evidence="10">
    <location>
        <begin position="342"/>
        <end position="344"/>
    </location>
</feature>
<feature type="helix" evidence="10">
    <location>
        <begin position="346"/>
        <end position="368"/>
    </location>
</feature>
<dbReference type="EC" id="2.7.3.2" evidence="1"/>
<dbReference type="EMBL" id="M14780">
    <property type="protein sequence ID" value="AAA52025.1"/>
    <property type="molecule type" value="mRNA"/>
</dbReference>
<dbReference type="EMBL" id="M21494">
    <property type="protein sequence ID" value="AAA96609.1"/>
    <property type="molecule type" value="Genomic_DNA"/>
</dbReference>
<dbReference type="EMBL" id="M21488">
    <property type="protein sequence ID" value="AAA96609.1"/>
    <property type="status" value="JOINED"/>
    <property type="molecule type" value="Genomic_DNA"/>
</dbReference>
<dbReference type="EMBL" id="M21489">
    <property type="protein sequence ID" value="AAA96609.1"/>
    <property type="status" value="JOINED"/>
    <property type="molecule type" value="Genomic_DNA"/>
</dbReference>
<dbReference type="EMBL" id="M21490">
    <property type="protein sequence ID" value="AAA96609.1"/>
    <property type="status" value="JOINED"/>
    <property type="molecule type" value="Genomic_DNA"/>
</dbReference>
<dbReference type="EMBL" id="M21491">
    <property type="protein sequence ID" value="AAA96609.1"/>
    <property type="status" value="JOINED"/>
    <property type="molecule type" value="Genomic_DNA"/>
</dbReference>
<dbReference type="EMBL" id="M21492">
    <property type="protein sequence ID" value="AAA96609.1"/>
    <property type="status" value="JOINED"/>
    <property type="molecule type" value="Genomic_DNA"/>
</dbReference>
<dbReference type="EMBL" id="M21493">
    <property type="protein sequence ID" value="AAA96609.1"/>
    <property type="status" value="JOINED"/>
    <property type="molecule type" value="Genomic_DNA"/>
</dbReference>
<dbReference type="EMBL" id="BT006793">
    <property type="protein sequence ID" value="AAP35439.1"/>
    <property type="molecule type" value="mRNA"/>
</dbReference>
<dbReference type="EMBL" id="AY585238">
    <property type="protein sequence ID" value="AAS79321.1"/>
    <property type="molecule type" value="Genomic_DNA"/>
</dbReference>
<dbReference type="EMBL" id="AC005781">
    <property type="protein sequence ID" value="AAC62841.1"/>
    <property type="molecule type" value="Genomic_DNA"/>
</dbReference>
<dbReference type="EMBL" id="BC007462">
    <property type="protein sequence ID" value="AAH07462.1"/>
    <property type="molecule type" value="mRNA"/>
</dbReference>
<dbReference type="EMBL" id="M16440">
    <property type="protein sequence ID" value="AAA52026.1"/>
    <property type="status" value="ALT_SEQ"/>
    <property type="molecule type" value="mRNA"/>
</dbReference>
<dbReference type="CCDS" id="CCDS12659.1"/>
<dbReference type="PIR" id="A31793">
    <property type="entry name" value="KIHUCM"/>
</dbReference>
<dbReference type="RefSeq" id="NP_001815.2">
    <property type="nucleotide sequence ID" value="NM_001824.4"/>
</dbReference>
<dbReference type="RefSeq" id="XP_016881729.1">
    <property type="nucleotide sequence ID" value="XM_017026240.1"/>
</dbReference>
<dbReference type="PDB" id="1I0E">
    <property type="method" value="X-ray"/>
    <property type="resolution" value="3.50 A"/>
    <property type="chains" value="A/B/C/D=1-381"/>
</dbReference>
<dbReference type="PDB" id="7BF2">
    <property type="method" value="X-ray"/>
    <property type="resolution" value="1.43 A"/>
    <property type="chains" value="CCC/DDD=301-318"/>
</dbReference>
<dbReference type="PDBsum" id="1I0E"/>
<dbReference type="PDBsum" id="7BF2"/>
<dbReference type="SMR" id="P06732"/>
<dbReference type="BioGRID" id="107578">
    <property type="interactions" value="67"/>
</dbReference>
<dbReference type="FunCoup" id="P06732">
    <property type="interactions" value="155"/>
</dbReference>
<dbReference type="IntAct" id="P06732">
    <property type="interactions" value="32"/>
</dbReference>
<dbReference type="MINT" id="P06732"/>
<dbReference type="STRING" id="9606.ENSP00000221476"/>
<dbReference type="BindingDB" id="P06732"/>
<dbReference type="ChEMBL" id="CHEMBL2656"/>
<dbReference type="DrugBank" id="DB02490">
    <property type="generic name" value="(Diaminomethyl-Methyl-Amino)-Acetic Acid"/>
</dbReference>
<dbReference type="DrugBank" id="DB00787">
    <property type="generic name" value="Acyclovir"/>
</dbReference>
<dbReference type="DrugBank" id="DB00148">
    <property type="generic name" value="Creatine"/>
</dbReference>
<dbReference type="DrugBank" id="DB04027">
    <property type="generic name" value="D-arginine"/>
</dbReference>
<dbReference type="DrugBank" id="DB13191">
    <property type="generic name" value="Phosphocreatine"/>
</dbReference>
<dbReference type="DrugBank" id="DB00300">
    <property type="generic name" value="Tenofovir disoproxil"/>
</dbReference>
<dbReference type="GlyGen" id="P06732">
    <property type="glycosylation" value="1 site, 1 O-linked glycan (1 site)"/>
</dbReference>
<dbReference type="iPTMnet" id="P06732"/>
<dbReference type="PhosphoSitePlus" id="P06732"/>
<dbReference type="SwissPalm" id="P06732"/>
<dbReference type="BioMuta" id="CKM"/>
<dbReference type="DMDM" id="125305"/>
<dbReference type="jPOST" id="P06732"/>
<dbReference type="MassIVE" id="P06732"/>
<dbReference type="PaxDb" id="9606-ENSP00000221476"/>
<dbReference type="PeptideAtlas" id="P06732"/>
<dbReference type="ProteomicsDB" id="51918"/>
<dbReference type="Pumba" id="P06732"/>
<dbReference type="ABCD" id="P06732">
    <property type="antibodies" value="2 sequenced antibodies"/>
</dbReference>
<dbReference type="Antibodypedia" id="17872">
    <property type="antibodies" value="923 antibodies from 39 providers"/>
</dbReference>
<dbReference type="DNASU" id="1158"/>
<dbReference type="Ensembl" id="ENST00000221476.4">
    <property type="protein sequence ID" value="ENSP00000221476.2"/>
    <property type="gene ID" value="ENSG00000104879.5"/>
</dbReference>
<dbReference type="GeneID" id="1158"/>
<dbReference type="KEGG" id="hsa:1158"/>
<dbReference type="MANE-Select" id="ENST00000221476.4">
    <property type="protein sequence ID" value="ENSP00000221476.2"/>
    <property type="RefSeq nucleotide sequence ID" value="NM_001824.5"/>
    <property type="RefSeq protein sequence ID" value="NP_001815.2"/>
</dbReference>
<dbReference type="UCSC" id="uc002pbd.5">
    <property type="organism name" value="human"/>
</dbReference>
<dbReference type="AGR" id="HGNC:1994"/>
<dbReference type="CTD" id="1158"/>
<dbReference type="DisGeNET" id="1158"/>
<dbReference type="GeneCards" id="CKM"/>
<dbReference type="HGNC" id="HGNC:1994">
    <property type="gene designation" value="CKM"/>
</dbReference>
<dbReference type="HPA" id="ENSG00000104879">
    <property type="expression patterns" value="Group enriched (skeletal muscle, tongue)"/>
</dbReference>
<dbReference type="MIM" id="123310">
    <property type="type" value="gene"/>
</dbReference>
<dbReference type="neXtProt" id="NX_P06732"/>
<dbReference type="OpenTargets" id="ENSG00000104879"/>
<dbReference type="PharmGKB" id="PA26532"/>
<dbReference type="VEuPathDB" id="HostDB:ENSG00000104879"/>
<dbReference type="eggNOG" id="KOG3581">
    <property type="taxonomic scope" value="Eukaryota"/>
</dbReference>
<dbReference type="GeneTree" id="ENSGT00950000182772"/>
<dbReference type="HOGENOM" id="CLU_019868_4_2_1"/>
<dbReference type="InParanoid" id="P06732"/>
<dbReference type="OMA" id="WGYLTSC"/>
<dbReference type="OrthoDB" id="430219at2759"/>
<dbReference type="PAN-GO" id="P06732">
    <property type="GO annotations" value="3 GO annotations based on evolutionary models"/>
</dbReference>
<dbReference type="PhylomeDB" id="P06732"/>
<dbReference type="TreeFam" id="TF314214"/>
<dbReference type="BioCyc" id="MetaCyc:HS02640-MONOMER"/>
<dbReference type="BRENDA" id="2.7.3.2">
    <property type="organism ID" value="2681"/>
</dbReference>
<dbReference type="PathwayCommons" id="P06732"/>
<dbReference type="Reactome" id="R-HSA-71288">
    <property type="pathway name" value="Creatine metabolism"/>
</dbReference>
<dbReference type="SABIO-RK" id="P06732"/>
<dbReference type="SignaLink" id="P06732"/>
<dbReference type="SIGNOR" id="P06732"/>
<dbReference type="BioGRID-ORCS" id="1158">
    <property type="hits" value="10 hits in 1152 CRISPR screens"/>
</dbReference>
<dbReference type="ChiTaRS" id="CKM">
    <property type="organism name" value="human"/>
</dbReference>
<dbReference type="EvolutionaryTrace" id="P06732"/>
<dbReference type="GeneWiki" id="CKM_(gene)"/>
<dbReference type="GenomeRNAi" id="1158"/>
<dbReference type="Pharos" id="P06732">
    <property type="development level" value="Tbio"/>
</dbReference>
<dbReference type="PRO" id="PR:P06732"/>
<dbReference type="Proteomes" id="UP000005640">
    <property type="component" value="Chromosome 19"/>
</dbReference>
<dbReference type="RNAct" id="P06732">
    <property type="molecule type" value="protein"/>
</dbReference>
<dbReference type="Bgee" id="ENSG00000104879">
    <property type="expression patterns" value="Expressed in skeletal muscle tissue of rectus abdominis and 119 other cell types or tissues"/>
</dbReference>
<dbReference type="GO" id="GO:0005829">
    <property type="term" value="C:cytosol"/>
    <property type="evidence" value="ECO:0000304"/>
    <property type="project" value="Reactome"/>
</dbReference>
<dbReference type="GO" id="GO:0005615">
    <property type="term" value="C:extracellular space"/>
    <property type="evidence" value="ECO:0000318"/>
    <property type="project" value="GO_Central"/>
</dbReference>
<dbReference type="GO" id="GO:0005524">
    <property type="term" value="F:ATP binding"/>
    <property type="evidence" value="ECO:0007669"/>
    <property type="project" value="UniProtKB-KW"/>
</dbReference>
<dbReference type="GO" id="GO:0004111">
    <property type="term" value="F:creatine kinase activity"/>
    <property type="evidence" value="ECO:0000318"/>
    <property type="project" value="GO_Central"/>
</dbReference>
<dbReference type="GO" id="GO:0046314">
    <property type="term" value="P:phosphocreatine biosynthetic process"/>
    <property type="evidence" value="ECO:0000318"/>
    <property type="project" value="GO_Central"/>
</dbReference>
<dbReference type="CDD" id="cd00716">
    <property type="entry name" value="creatine_kinase_like"/>
    <property type="match status" value="1"/>
</dbReference>
<dbReference type="FunFam" id="3.30.590.10:FF:000026">
    <property type="entry name" value="Creatine kinase B-type"/>
    <property type="match status" value="1"/>
</dbReference>
<dbReference type="FunFam" id="1.10.135.10:FF:000001">
    <property type="entry name" value="Creatine kinase M-type"/>
    <property type="match status" value="1"/>
</dbReference>
<dbReference type="Gene3D" id="1.10.135.10">
    <property type="entry name" value="ATP:guanido phosphotransferase, N-terminal domain"/>
    <property type="match status" value="1"/>
</dbReference>
<dbReference type="Gene3D" id="3.30.590.10">
    <property type="entry name" value="Glutamine synthetase/guanido kinase, catalytic domain"/>
    <property type="match status" value="1"/>
</dbReference>
<dbReference type="InterPro" id="IPR000749">
    <property type="entry name" value="ATP-guanido_PTrfase"/>
</dbReference>
<dbReference type="InterPro" id="IPR022415">
    <property type="entry name" value="ATP-guanido_PTrfase_AS"/>
</dbReference>
<dbReference type="InterPro" id="IPR022414">
    <property type="entry name" value="ATP-guanido_PTrfase_cat"/>
</dbReference>
<dbReference type="InterPro" id="IPR022413">
    <property type="entry name" value="ATP-guanido_PTrfase_N"/>
</dbReference>
<dbReference type="InterPro" id="IPR036802">
    <property type="entry name" value="ATP-guanido_PTrfase_N_sf"/>
</dbReference>
<dbReference type="InterPro" id="IPR014746">
    <property type="entry name" value="Gln_synth/guanido_kin_cat_dom"/>
</dbReference>
<dbReference type="PANTHER" id="PTHR11547">
    <property type="entry name" value="ARGININE OR CREATINE KINASE"/>
    <property type="match status" value="1"/>
</dbReference>
<dbReference type="PANTHER" id="PTHR11547:SF63">
    <property type="entry name" value="CREATINE KINASE M-TYPE"/>
    <property type="match status" value="1"/>
</dbReference>
<dbReference type="Pfam" id="PF00217">
    <property type="entry name" value="ATP-gua_Ptrans"/>
    <property type="match status" value="1"/>
</dbReference>
<dbReference type="Pfam" id="PF02807">
    <property type="entry name" value="ATP-gua_PtransN"/>
    <property type="match status" value="1"/>
</dbReference>
<dbReference type="SUPFAM" id="SSF55931">
    <property type="entry name" value="Glutamine synthetase/guanido kinase"/>
    <property type="match status" value="1"/>
</dbReference>
<dbReference type="SUPFAM" id="SSF48034">
    <property type="entry name" value="Guanido kinase N-terminal domain"/>
    <property type="match status" value="1"/>
</dbReference>
<dbReference type="PROSITE" id="PS00112">
    <property type="entry name" value="PHOSPHAGEN_KINASE"/>
    <property type="match status" value="1"/>
</dbReference>
<dbReference type="PROSITE" id="PS51510">
    <property type="entry name" value="PHOSPHAGEN_KINASE_C"/>
    <property type="match status" value="1"/>
</dbReference>
<dbReference type="PROSITE" id="PS51509">
    <property type="entry name" value="PHOSPHAGEN_KINASE_N"/>
    <property type="match status" value="1"/>
</dbReference>
<protein>
    <recommendedName>
        <fullName>Creatine kinase M-type</fullName>
        <ecNumber evidence="1">2.7.3.2</ecNumber>
    </recommendedName>
    <alternativeName>
        <fullName>Creatine kinase M chain</fullName>
    </alternativeName>
    <alternativeName>
        <fullName evidence="9">Creatine phosphokinase M-type</fullName>
        <shortName>CPK-M</shortName>
    </alternativeName>
    <alternativeName>
        <fullName>M-CK</fullName>
    </alternativeName>
</protein>
<reference key="1">
    <citation type="journal article" date="1986" name="Biochem. Biophys. Res. Commun.">
        <title>Isolation and sequence analysis of a full-length cDNA for human M creatine kinase.</title>
        <authorList>
            <person name="Perryman M.B."/>
            <person name="Kerner S.A."/>
            <person name="Bohlmeyer T.J."/>
            <person name="Roberts R."/>
        </authorList>
    </citation>
    <scope>NUCLEOTIDE SEQUENCE [MRNA]</scope>
</reference>
<reference key="2">
    <citation type="journal article" date="1988" name="J. Biol. Chem.">
        <title>Developmental regulation and tissue-specific expression of the human muscle creatine kinase gene.</title>
        <authorList>
            <person name="Trask R.V."/>
            <person name="Strauss A.W."/>
            <person name="Billadello J.J."/>
        </authorList>
    </citation>
    <scope>NUCLEOTIDE SEQUENCE [GENOMIC DNA]</scope>
</reference>
<reference key="3">
    <citation type="submission" date="2003-05" db="EMBL/GenBank/DDBJ databases">
        <title>Cloning of human full-length CDSs in BD Creator(TM) system donor vector.</title>
        <authorList>
            <person name="Kalnine N."/>
            <person name="Chen X."/>
            <person name="Rolfs A."/>
            <person name="Halleck A."/>
            <person name="Hines L."/>
            <person name="Eisenstein S."/>
            <person name="Koundinya M."/>
            <person name="Raphael J."/>
            <person name="Moreira D."/>
            <person name="Kelley T."/>
            <person name="LaBaer J."/>
            <person name="Lin Y."/>
            <person name="Phelan M."/>
            <person name="Farmer A."/>
        </authorList>
    </citation>
    <scope>NUCLEOTIDE SEQUENCE [LARGE SCALE MRNA]</scope>
</reference>
<reference key="4">
    <citation type="submission" date="2004-03" db="EMBL/GenBank/DDBJ databases">
        <authorList>
            <consortium name="SeattleSNPs variation discovery resource"/>
        </authorList>
    </citation>
    <scope>NUCLEOTIDE SEQUENCE [GENOMIC DNA]</scope>
    <scope>VARIANTS GLY-83; VAL-127 AND ALA-243</scope>
</reference>
<reference key="5">
    <citation type="journal article" date="2004" name="Nature">
        <title>The DNA sequence and biology of human chromosome 19.</title>
        <authorList>
            <person name="Grimwood J."/>
            <person name="Gordon L.A."/>
            <person name="Olsen A.S."/>
            <person name="Terry A."/>
            <person name="Schmutz J."/>
            <person name="Lamerdin J.E."/>
            <person name="Hellsten U."/>
            <person name="Goodstein D."/>
            <person name="Couronne O."/>
            <person name="Tran-Gyamfi M."/>
            <person name="Aerts A."/>
            <person name="Altherr M."/>
            <person name="Ashworth L."/>
            <person name="Bajorek E."/>
            <person name="Black S."/>
            <person name="Branscomb E."/>
            <person name="Caenepeel S."/>
            <person name="Carrano A.V."/>
            <person name="Caoile C."/>
            <person name="Chan Y.M."/>
            <person name="Christensen M."/>
            <person name="Cleland C.A."/>
            <person name="Copeland A."/>
            <person name="Dalin E."/>
            <person name="Dehal P."/>
            <person name="Denys M."/>
            <person name="Detter J.C."/>
            <person name="Escobar J."/>
            <person name="Flowers D."/>
            <person name="Fotopulos D."/>
            <person name="Garcia C."/>
            <person name="Georgescu A.M."/>
            <person name="Glavina T."/>
            <person name="Gomez M."/>
            <person name="Gonzales E."/>
            <person name="Groza M."/>
            <person name="Hammon N."/>
            <person name="Hawkins T."/>
            <person name="Haydu L."/>
            <person name="Ho I."/>
            <person name="Huang W."/>
            <person name="Israni S."/>
            <person name="Jett J."/>
            <person name="Kadner K."/>
            <person name="Kimball H."/>
            <person name="Kobayashi A."/>
            <person name="Larionov V."/>
            <person name="Leem S.-H."/>
            <person name="Lopez F."/>
            <person name="Lou Y."/>
            <person name="Lowry S."/>
            <person name="Malfatti S."/>
            <person name="Martinez D."/>
            <person name="McCready P.M."/>
            <person name="Medina C."/>
            <person name="Morgan J."/>
            <person name="Nelson K."/>
            <person name="Nolan M."/>
            <person name="Ovcharenko I."/>
            <person name="Pitluck S."/>
            <person name="Pollard M."/>
            <person name="Popkie A.P."/>
            <person name="Predki P."/>
            <person name="Quan G."/>
            <person name="Ramirez L."/>
            <person name="Rash S."/>
            <person name="Retterer J."/>
            <person name="Rodriguez A."/>
            <person name="Rogers S."/>
            <person name="Salamov A."/>
            <person name="Salazar A."/>
            <person name="She X."/>
            <person name="Smith D."/>
            <person name="Slezak T."/>
            <person name="Solovyev V."/>
            <person name="Thayer N."/>
            <person name="Tice H."/>
            <person name="Tsai M."/>
            <person name="Ustaszewska A."/>
            <person name="Vo N."/>
            <person name="Wagner M."/>
            <person name="Wheeler J."/>
            <person name="Wu K."/>
            <person name="Xie G."/>
            <person name="Yang J."/>
            <person name="Dubchak I."/>
            <person name="Furey T.S."/>
            <person name="DeJong P."/>
            <person name="Dickson M."/>
            <person name="Gordon D."/>
            <person name="Eichler E.E."/>
            <person name="Pennacchio L.A."/>
            <person name="Richardson P."/>
            <person name="Stubbs L."/>
            <person name="Rokhsar D.S."/>
            <person name="Myers R.M."/>
            <person name="Rubin E.M."/>
            <person name="Lucas S.M."/>
        </authorList>
    </citation>
    <scope>NUCLEOTIDE SEQUENCE [LARGE SCALE GENOMIC DNA]</scope>
</reference>
<reference key="6">
    <citation type="journal article" date="2004" name="Genome Res.">
        <title>The status, quality, and expansion of the NIH full-length cDNA project: the Mammalian Gene Collection (MGC).</title>
        <authorList>
            <consortium name="The MGC Project Team"/>
        </authorList>
    </citation>
    <scope>NUCLEOTIDE SEQUENCE [LARGE SCALE MRNA]</scope>
    <source>
        <tissue>Liver</tissue>
    </source>
</reference>
<reference key="7">
    <citation type="journal article" date="1990" name="J. Biol. Chem.">
        <title>Muscle creatine kinase isoenzyme expression in adult human brain.</title>
        <authorList>
            <person name="Hamburg R.J."/>
            <person name="Friedman D.L."/>
            <person name="Olson E.N."/>
            <person name="Ma T.S."/>
            <person name="Cortez M.D."/>
            <person name="Goodman C."/>
            <person name="Puleo P.R."/>
            <person name="Perryman M.B."/>
        </authorList>
    </citation>
    <scope>PROTEIN SEQUENCE OF 1-30</scope>
    <source>
        <tissue>Brain</tissue>
    </source>
</reference>
<reference key="8">
    <citation type="journal article" date="1987" name="Am. J. Hum. Genet.">
        <title>cDNA cloning and mapping of the human creatine kinase M gene to 19q13.</title>
        <authorList>
            <person name="Nigro J.M."/>
            <person name="Schweinfest C.W."/>
            <person name="Rajkovic A."/>
            <person name="Pavlovic J."/>
            <person name="Jamal S."/>
            <person name="Dottin R.P."/>
            <person name="Hart J.T."/>
            <person name="Kamarck M.E."/>
            <person name="Rae P.M.M."/>
            <person name="Carty M.D."/>
            <person name="Martin-Deleon P."/>
        </authorList>
    </citation>
    <scope>NUCLEOTIDE SEQUENCE [MRNA] OF 257-327</scope>
</reference>
<reference key="9">
    <citation type="journal article" date="1999" name="Acta Crystallogr. D">
        <title>Crystallization and preliminary X-ray analysis of human muscle creatine kinase.</title>
        <authorList>
            <person name="Tang L."/>
            <person name="Zhou H.M."/>
            <person name="Lin Z.J."/>
        </authorList>
    </citation>
    <scope>X-RAY CRYSTALLOGRAPHY (3.5 ANGSTROMS)</scope>
</reference>